<protein>
    <recommendedName>
        <fullName evidence="1">DNA polymerase sliding clamp</fullName>
    </recommendedName>
    <alternativeName>
        <fullName evidence="1">Proliferating cell nuclear antigen homolog</fullName>
        <shortName evidence="1">PCNA</shortName>
    </alternativeName>
</protein>
<dbReference type="EMBL" id="CP000742">
    <property type="protein sequence ID" value="ABR54916.1"/>
    <property type="molecule type" value="Genomic_DNA"/>
</dbReference>
<dbReference type="RefSeq" id="WP_012065845.1">
    <property type="nucleotide sequence ID" value="NC_009634.1"/>
</dbReference>
<dbReference type="SMR" id="A6UQZ4"/>
<dbReference type="STRING" id="406327.Mevan_1013"/>
<dbReference type="GeneID" id="5325624"/>
<dbReference type="KEGG" id="mvn:Mevan_1013"/>
<dbReference type="eggNOG" id="arCOG00488">
    <property type="taxonomic scope" value="Archaea"/>
</dbReference>
<dbReference type="HOGENOM" id="CLU_043978_1_0_2"/>
<dbReference type="OrthoDB" id="14749at2157"/>
<dbReference type="Proteomes" id="UP000001107">
    <property type="component" value="Chromosome"/>
</dbReference>
<dbReference type="GO" id="GO:0003677">
    <property type="term" value="F:DNA binding"/>
    <property type="evidence" value="ECO:0007669"/>
    <property type="project" value="UniProtKB-UniRule"/>
</dbReference>
<dbReference type="GO" id="GO:0030337">
    <property type="term" value="F:DNA polymerase processivity factor activity"/>
    <property type="evidence" value="ECO:0007669"/>
    <property type="project" value="UniProtKB-UniRule"/>
</dbReference>
<dbReference type="GO" id="GO:0006272">
    <property type="term" value="P:leading strand elongation"/>
    <property type="evidence" value="ECO:0007669"/>
    <property type="project" value="TreeGrafter"/>
</dbReference>
<dbReference type="GO" id="GO:0006275">
    <property type="term" value="P:regulation of DNA replication"/>
    <property type="evidence" value="ECO:0007669"/>
    <property type="project" value="UniProtKB-UniRule"/>
</dbReference>
<dbReference type="CDD" id="cd00577">
    <property type="entry name" value="PCNA"/>
    <property type="match status" value="1"/>
</dbReference>
<dbReference type="Gene3D" id="3.70.10.10">
    <property type="match status" value="1"/>
</dbReference>
<dbReference type="HAMAP" id="MF_00317">
    <property type="entry name" value="DNApol_clamp_arch"/>
    <property type="match status" value="1"/>
</dbReference>
<dbReference type="InterPro" id="IPR046938">
    <property type="entry name" value="DNA_clamp_sf"/>
</dbReference>
<dbReference type="InterPro" id="IPR000730">
    <property type="entry name" value="Pr_cel_nuc_antig"/>
</dbReference>
<dbReference type="InterPro" id="IPR022649">
    <property type="entry name" value="Pr_cel_nuc_antig_C"/>
</dbReference>
<dbReference type="InterPro" id="IPR022659">
    <property type="entry name" value="Pr_cel_nuc_antig_CS"/>
</dbReference>
<dbReference type="InterPro" id="IPR022648">
    <property type="entry name" value="Pr_cel_nuc_antig_N"/>
</dbReference>
<dbReference type="NCBIfam" id="TIGR00590">
    <property type="entry name" value="pcna"/>
    <property type="match status" value="1"/>
</dbReference>
<dbReference type="NCBIfam" id="NF002219">
    <property type="entry name" value="PRK01115.1-2"/>
    <property type="match status" value="1"/>
</dbReference>
<dbReference type="NCBIfam" id="NF002222">
    <property type="entry name" value="PRK01115.1-5"/>
    <property type="match status" value="1"/>
</dbReference>
<dbReference type="PANTHER" id="PTHR11352">
    <property type="entry name" value="PROLIFERATING CELL NUCLEAR ANTIGEN"/>
    <property type="match status" value="1"/>
</dbReference>
<dbReference type="PANTHER" id="PTHR11352:SF0">
    <property type="entry name" value="PROLIFERATING CELL NUCLEAR ANTIGEN"/>
    <property type="match status" value="1"/>
</dbReference>
<dbReference type="Pfam" id="PF02747">
    <property type="entry name" value="PCNA_C"/>
    <property type="match status" value="1"/>
</dbReference>
<dbReference type="Pfam" id="PF00705">
    <property type="entry name" value="PCNA_N"/>
    <property type="match status" value="1"/>
</dbReference>
<dbReference type="PRINTS" id="PR00339">
    <property type="entry name" value="PCNACYCLIN"/>
</dbReference>
<dbReference type="SUPFAM" id="SSF55979">
    <property type="entry name" value="DNA clamp"/>
    <property type="match status" value="2"/>
</dbReference>
<dbReference type="PROSITE" id="PS01251">
    <property type="entry name" value="PCNA_1"/>
    <property type="match status" value="1"/>
</dbReference>
<comment type="function">
    <text evidence="1">Sliding clamp subunit that acts as a moving platform for DNA processing. Responsible for tethering the catalytic subunit of DNA polymerase and other proteins to DNA during high-speed replication.</text>
</comment>
<comment type="subunit">
    <text evidence="1">Homotrimer. The subunits circularize to form a toroid; DNA passes through its center. Replication factor C (RFC) is required to load the toroid on the DNA.</text>
</comment>
<comment type="similarity">
    <text evidence="1">Belongs to the PCNA family.</text>
</comment>
<organism>
    <name type="scientific">Methanococcus vannielii (strain ATCC 35089 / DSM 1224 / JCM 13029 / OCM 148 / SB)</name>
    <dbReference type="NCBI Taxonomy" id="406327"/>
    <lineage>
        <taxon>Archaea</taxon>
        <taxon>Methanobacteriati</taxon>
        <taxon>Methanobacteriota</taxon>
        <taxon>Methanomada group</taxon>
        <taxon>Methanococci</taxon>
        <taxon>Methanococcales</taxon>
        <taxon>Methanococcaceae</taxon>
        <taxon>Methanococcus</taxon>
    </lineage>
</organism>
<reference key="1">
    <citation type="submission" date="2007-06" db="EMBL/GenBank/DDBJ databases">
        <title>Complete sequence of Methanococcus vannielii SB.</title>
        <authorList>
            <consortium name="US DOE Joint Genome Institute"/>
            <person name="Copeland A."/>
            <person name="Lucas S."/>
            <person name="Lapidus A."/>
            <person name="Barry K."/>
            <person name="Glavina del Rio T."/>
            <person name="Dalin E."/>
            <person name="Tice H."/>
            <person name="Pitluck S."/>
            <person name="Chain P."/>
            <person name="Malfatti S."/>
            <person name="Shin M."/>
            <person name="Vergez L."/>
            <person name="Schmutz J."/>
            <person name="Larimer F."/>
            <person name="Land M."/>
            <person name="Hauser L."/>
            <person name="Kyrpides N."/>
            <person name="Anderson I."/>
            <person name="Sieprawska-Lupa M."/>
            <person name="Whitman W.B."/>
            <person name="Richardson P."/>
        </authorList>
    </citation>
    <scope>NUCLEOTIDE SEQUENCE [LARGE SCALE GENOMIC DNA]</scope>
    <source>
        <strain>ATCC 35089 / DSM 1224 / JCM 13029 / OCM 148 / SB</strain>
    </source>
</reference>
<keyword id="KW-0235">DNA replication</keyword>
<keyword id="KW-0238">DNA-binding</keyword>
<name>PCNA_METVS</name>
<sequence>MFKATCNSRDFKKVINATSNLVDEICFEVDETGIKASAMDPSHVALVSMGMPKEVFESYEGDIHDIGIDLEALKKIIARSKGDEKLILELDDEKNKLNVTFKSNVTRKFSIALYDVSSSNLKVPDISYPNQVSIKAGAFVEALKDAELVNDHITLKVDEDKFVIYSKGDLNQSETVFENNNDEYETLTEFKMSEPSKSTFNLAYLKDLTKSTSAEDILKIYLGSDMPVKIEYEVSGSKLVFLLAPRIES</sequence>
<gene>
    <name evidence="1" type="primary">pcn</name>
    <name type="ordered locus">Mevan_1013</name>
</gene>
<accession>A6UQZ4</accession>
<evidence type="ECO:0000255" key="1">
    <source>
        <dbReference type="HAMAP-Rule" id="MF_00317"/>
    </source>
</evidence>
<proteinExistence type="inferred from homology"/>
<feature type="chain" id="PRO_1000019177" description="DNA polymerase sliding clamp">
    <location>
        <begin position="1"/>
        <end position="249"/>
    </location>
</feature>